<dbReference type="EMBL" id="AY653733">
    <property type="protein sequence ID" value="AAV51142.1"/>
    <property type="molecule type" value="Genomic_DNA"/>
</dbReference>
<dbReference type="KEGG" id="vg:9925554"/>
<dbReference type="Proteomes" id="UP000001134">
    <property type="component" value="Genome"/>
</dbReference>
<dbReference type="InterPro" id="IPR045365">
    <property type="entry name" value="DUF5884"/>
</dbReference>
<dbReference type="Pfam" id="PF19231">
    <property type="entry name" value="DUF5884"/>
    <property type="match status" value="1"/>
</dbReference>
<comment type="similarity">
    <text evidence="1">Belongs to the mimivirus L885/R898 family.</text>
</comment>
<feature type="chain" id="PRO_0000071385" description="Uncharacterized protein L885">
    <location>
        <begin position="1"/>
        <end position="144"/>
    </location>
</feature>
<sequence length="144" mass="16899">MDKLVPDVFKNKISDIIIEDDFDKENLVQETIACIEFDNFECKFECYKFQSSKSDSPESDISHNINIYTPIIYDYQNYQIDNSAVDILNQLNLKNNTFNRKMLFVLIHNFTMRVTDLCGYSIGLSEFNCDKIDKIKKKIQILVD</sequence>
<proteinExistence type="inferred from homology"/>
<reference key="1">
    <citation type="journal article" date="2004" name="Science">
        <title>The 1.2-megabase genome sequence of Mimivirus.</title>
        <authorList>
            <person name="Raoult D."/>
            <person name="Audic S."/>
            <person name="Robert C."/>
            <person name="Abergel C."/>
            <person name="Renesto P."/>
            <person name="Ogata H."/>
            <person name="La Scola B."/>
            <person name="Susan M."/>
            <person name="Claverie J.-M."/>
        </authorList>
    </citation>
    <scope>NUCLEOTIDE SEQUENCE [LARGE SCALE GENOMIC DNA]</scope>
    <source>
        <strain>Rowbotham-Bradford</strain>
    </source>
</reference>
<organismHost>
    <name type="scientific">Acanthamoeba polyphaga</name>
    <name type="common">Amoeba</name>
    <dbReference type="NCBI Taxonomy" id="5757"/>
</organismHost>
<evidence type="ECO:0000305" key="1"/>
<organism>
    <name type="scientific">Acanthamoeba polyphaga mimivirus</name>
    <name type="common">APMV</name>
    <dbReference type="NCBI Taxonomy" id="212035"/>
    <lineage>
        <taxon>Viruses</taxon>
        <taxon>Varidnaviria</taxon>
        <taxon>Bamfordvirae</taxon>
        <taxon>Nucleocytoviricota</taxon>
        <taxon>Megaviricetes</taxon>
        <taxon>Imitervirales</taxon>
        <taxon>Mimiviridae</taxon>
        <taxon>Megamimivirinae</taxon>
        <taxon>Mimivirus</taxon>
        <taxon>Mimivirus bradfordmassiliense</taxon>
    </lineage>
</organism>
<protein>
    <recommendedName>
        <fullName>Uncharacterized protein L885</fullName>
    </recommendedName>
</protein>
<keyword id="KW-1185">Reference proteome</keyword>
<accession>Q5UQY5</accession>
<name>YL885_MIMIV</name>
<gene>
    <name type="ordered locus">MIMI_L885</name>
</gene>